<proteinExistence type="uncertain"/>
<sequence length="429" mass="48243">MQSARRHLNTIFILDFGSQYTYVLAKQVRKLFVYCEVLPWNISVQCLKERAPLGIILSGGPHSVYENKAPHLDPEIYKLGIPILAICYGMQLMARDFGGTVSPGVGEFGYTPIHLYPCELFKHIVDCESLDTEIRMSHRDHVTTIPEGFNVIASTSQCSISGIENTKQRLYGLQFHPEVSDSTPTGNKILETFVQEICSAPTLWNPLYIQQDLVSKIQDTVIEVFDEVAQSLDVQWLAQGTIYSDVIESSRSGHASEVIKSHHNVGGLPKNLKLKLVEPLRYLFKDEVRILGEALGLSSYLLDRHPFPGPGLTIRVIGEILPEYLAILRRADLIFIEELRKAKLYDKISQAFALFLPIKSVSVKGDCRSYGYTIALRAVESTDFMTGRWAYLPCDVLSSCSSRIINEIPEVSRVVYDISDKPPATIEWE</sequence>
<organism>
    <name type="scientific">Chlamydia pneumoniae</name>
    <name type="common">Chlamydophila pneumoniae</name>
    <dbReference type="NCBI Taxonomy" id="83558"/>
    <lineage>
        <taxon>Bacteria</taxon>
        <taxon>Pseudomonadati</taxon>
        <taxon>Chlamydiota</taxon>
        <taxon>Chlamydiia</taxon>
        <taxon>Chlamydiales</taxon>
        <taxon>Chlamydiaceae</taxon>
        <taxon>Chlamydia/Chlamydophila group</taxon>
        <taxon>Chlamydia</taxon>
    </lineage>
</organism>
<keyword id="KW-0067">ATP-binding</keyword>
<keyword id="KW-0315">Glutamine amidotransferase</keyword>
<keyword id="KW-0332">GMP biosynthesis</keyword>
<keyword id="KW-0436">Ligase</keyword>
<keyword id="KW-0547">Nucleotide-binding</keyword>
<keyword id="KW-0658">Purine biosynthesis</keyword>
<reference key="1">
    <citation type="journal article" date="1999" name="Nat. Genet.">
        <title>Comparative genomes of Chlamydia pneumoniae and C. trachomatis.</title>
        <authorList>
            <person name="Kalman S."/>
            <person name="Mitchell W.P."/>
            <person name="Marathe R."/>
            <person name="Lammel C.J."/>
            <person name="Fan J."/>
            <person name="Hyman R.W."/>
            <person name="Olinger L."/>
            <person name="Grimwood J."/>
            <person name="Davis R.W."/>
            <person name="Stephens R.S."/>
        </authorList>
    </citation>
    <scope>NUCLEOTIDE SEQUENCE [LARGE SCALE GENOMIC DNA]</scope>
    <source>
        <strain>CWL029</strain>
    </source>
</reference>
<reference key="2">
    <citation type="journal article" date="2000" name="Nucleic Acids Res.">
        <title>Genome sequences of Chlamydia trachomatis MoPn and Chlamydia pneumoniae AR39.</title>
        <authorList>
            <person name="Read T.D."/>
            <person name="Brunham R.C."/>
            <person name="Shen C."/>
            <person name="Gill S.R."/>
            <person name="Heidelberg J.F."/>
            <person name="White O."/>
            <person name="Hickey E.K."/>
            <person name="Peterson J.D."/>
            <person name="Utterback T.R."/>
            <person name="Berry K.J."/>
            <person name="Bass S."/>
            <person name="Linher K.D."/>
            <person name="Weidman J.F."/>
            <person name="Khouri H.M."/>
            <person name="Craven B."/>
            <person name="Bowman C."/>
            <person name="Dodson R.J."/>
            <person name="Gwinn M.L."/>
            <person name="Nelson W.C."/>
            <person name="DeBoy R.T."/>
            <person name="Kolonay J.F."/>
            <person name="McClarty G."/>
            <person name="Salzberg S.L."/>
            <person name="Eisen J.A."/>
            <person name="Fraser C.M."/>
        </authorList>
    </citation>
    <scope>NUCLEOTIDE SEQUENCE [LARGE SCALE GENOMIC DNA]</scope>
    <source>
        <strain>AR39</strain>
    </source>
</reference>
<reference key="3">
    <citation type="journal article" date="2000" name="Nucleic Acids Res.">
        <title>Comparison of whole genome sequences of Chlamydia pneumoniae J138 from Japan and CWL029 from USA.</title>
        <authorList>
            <person name="Shirai M."/>
            <person name="Hirakawa H."/>
            <person name="Kimoto M."/>
            <person name="Tabuchi M."/>
            <person name="Kishi F."/>
            <person name="Ouchi K."/>
            <person name="Shiba T."/>
            <person name="Ishii K."/>
            <person name="Hattori M."/>
            <person name="Kuhara S."/>
            <person name="Nakazawa T."/>
        </authorList>
    </citation>
    <scope>NUCLEOTIDE SEQUENCE [LARGE SCALE GENOMIC DNA]</scope>
    <source>
        <strain>J138</strain>
    </source>
</reference>
<reference key="4">
    <citation type="submission" date="2002-05" db="EMBL/GenBank/DDBJ databases">
        <title>The genome sequence of Chlamydia pneumoniae TW183 and comparison with other Chlamydia strains based on whole genome sequence analysis.</title>
        <authorList>
            <person name="Geng M.M."/>
            <person name="Schuhmacher A."/>
            <person name="Muehldorfer I."/>
            <person name="Bensch K.W."/>
            <person name="Schaefer K.P."/>
            <person name="Schneider S."/>
            <person name="Pohl T."/>
            <person name="Essig A."/>
            <person name="Marre R."/>
            <person name="Melchers K."/>
        </authorList>
    </citation>
    <scope>NUCLEOTIDE SEQUENCE [LARGE SCALE GENOMIC DNA]</scope>
    <source>
        <strain>TW-183</strain>
    </source>
</reference>
<dbReference type="EC" id="6.3.5.2"/>
<dbReference type="EMBL" id="AE001363">
    <property type="protein sequence ID" value="AAD18324.1"/>
    <property type="molecule type" value="Genomic_DNA"/>
</dbReference>
<dbReference type="EMBL" id="AE002161">
    <property type="protein sequence ID" value="AAF38415.1"/>
    <property type="molecule type" value="Genomic_DNA"/>
</dbReference>
<dbReference type="EMBL" id="BA000008">
    <property type="protein sequence ID" value="BAA98381.1"/>
    <property type="molecule type" value="Genomic_DNA"/>
</dbReference>
<dbReference type="EMBL" id="AE009440">
    <property type="protein sequence ID" value="AAP98106.1"/>
    <property type="molecule type" value="Genomic_DNA"/>
</dbReference>
<dbReference type="PIR" id="B72109">
    <property type="entry name" value="B72109"/>
</dbReference>
<dbReference type="PIR" id="C86512">
    <property type="entry name" value="C86512"/>
</dbReference>
<dbReference type="RefSeq" id="NP_224379.1">
    <property type="nucleotide sequence ID" value="NC_000922.1"/>
</dbReference>
<dbReference type="RefSeq" id="WP_010882821.1">
    <property type="nucleotide sequence ID" value="NZ_LN847257.1"/>
</dbReference>
<dbReference type="SMR" id="Q9Z913"/>
<dbReference type="MEROPS" id="C26.A21"/>
<dbReference type="GeneID" id="45050218"/>
<dbReference type="KEGG" id="cpa:CP_0599"/>
<dbReference type="KEGG" id="cpj:guaA"/>
<dbReference type="KEGG" id="cpn:CPn_0171"/>
<dbReference type="KEGG" id="cpt:CpB0173"/>
<dbReference type="PATRIC" id="fig|115713.3.peg.195"/>
<dbReference type="eggNOG" id="COG0518">
    <property type="taxonomic scope" value="Bacteria"/>
</dbReference>
<dbReference type="eggNOG" id="COG0519">
    <property type="taxonomic scope" value="Bacteria"/>
</dbReference>
<dbReference type="HOGENOM" id="CLU_014340_0_5_0"/>
<dbReference type="OrthoDB" id="9802219at2"/>
<dbReference type="UniPathway" id="UPA00189">
    <property type="reaction ID" value="UER00296"/>
</dbReference>
<dbReference type="Proteomes" id="UP000000583">
    <property type="component" value="Chromosome"/>
</dbReference>
<dbReference type="Proteomes" id="UP000000801">
    <property type="component" value="Chromosome"/>
</dbReference>
<dbReference type="GO" id="GO:0005829">
    <property type="term" value="C:cytosol"/>
    <property type="evidence" value="ECO:0007669"/>
    <property type="project" value="TreeGrafter"/>
</dbReference>
<dbReference type="GO" id="GO:0005524">
    <property type="term" value="F:ATP binding"/>
    <property type="evidence" value="ECO:0007669"/>
    <property type="project" value="UniProtKB-KW"/>
</dbReference>
<dbReference type="GO" id="GO:0003921">
    <property type="term" value="F:GMP synthase activity"/>
    <property type="evidence" value="ECO:0007669"/>
    <property type="project" value="InterPro"/>
</dbReference>
<dbReference type="CDD" id="cd01742">
    <property type="entry name" value="GATase1_GMP_Synthase"/>
    <property type="match status" value="1"/>
</dbReference>
<dbReference type="CDD" id="cd01997">
    <property type="entry name" value="GMP_synthase_C"/>
    <property type="match status" value="1"/>
</dbReference>
<dbReference type="FunFam" id="3.30.300.10:FF:000002">
    <property type="entry name" value="GMP synthase [glutamine-hydrolyzing]"/>
    <property type="match status" value="1"/>
</dbReference>
<dbReference type="Gene3D" id="3.30.300.10">
    <property type="match status" value="1"/>
</dbReference>
<dbReference type="Gene3D" id="3.40.50.880">
    <property type="match status" value="1"/>
</dbReference>
<dbReference type="Gene3D" id="3.40.50.620">
    <property type="entry name" value="HUPs"/>
    <property type="match status" value="1"/>
</dbReference>
<dbReference type="InterPro" id="IPR029062">
    <property type="entry name" value="Class_I_gatase-like"/>
</dbReference>
<dbReference type="InterPro" id="IPR017926">
    <property type="entry name" value="GATASE"/>
</dbReference>
<dbReference type="InterPro" id="IPR001674">
    <property type="entry name" value="GMP_synth_C"/>
</dbReference>
<dbReference type="InterPro" id="IPR004739">
    <property type="entry name" value="GMP_synth_GATase"/>
</dbReference>
<dbReference type="InterPro" id="IPR025777">
    <property type="entry name" value="GMPS_ATP_PPase_dom"/>
</dbReference>
<dbReference type="InterPro" id="IPR014729">
    <property type="entry name" value="Rossmann-like_a/b/a_fold"/>
</dbReference>
<dbReference type="NCBIfam" id="TIGR00888">
    <property type="entry name" value="guaA_Nterm"/>
    <property type="match status" value="1"/>
</dbReference>
<dbReference type="PANTHER" id="PTHR11922:SF2">
    <property type="entry name" value="GMP SYNTHASE [GLUTAMINE-HYDROLYZING]"/>
    <property type="match status" value="1"/>
</dbReference>
<dbReference type="PANTHER" id="PTHR11922">
    <property type="entry name" value="GMP SYNTHASE-RELATED"/>
    <property type="match status" value="1"/>
</dbReference>
<dbReference type="Pfam" id="PF00117">
    <property type="entry name" value="GATase"/>
    <property type="match status" value="1"/>
</dbReference>
<dbReference type="Pfam" id="PF00958">
    <property type="entry name" value="GMP_synt_C"/>
    <property type="match status" value="1"/>
</dbReference>
<dbReference type="PRINTS" id="PR00097">
    <property type="entry name" value="ANTSNTHASEII"/>
</dbReference>
<dbReference type="PRINTS" id="PR00096">
    <property type="entry name" value="GATASE"/>
</dbReference>
<dbReference type="SUPFAM" id="SSF52402">
    <property type="entry name" value="Adenine nucleotide alpha hydrolases-like"/>
    <property type="match status" value="1"/>
</dbReference>
<dbReference type="SUPFAM" id="SSF52317">
    <property type="entry name" value="Class I glutamine amidotransferase-like"/>
    <property type="match status" value="1"/>
</dbReference>
<dbReference type="SUPFAM" id="SSF54810">
    <property type="entry name" value="GMP synthetase C-terminal dimerisation domain"/>
    <property type="match status" value="1"/>
</dbReference>
<dbReference type="PROSITE" id="PS51273">
    <property type="entry name" value="GATASE_TYPE_1"/>
    <property type="match status" value="1"/>
</dbReference>
<dbReference type="PROSITE" id="PS51553">
    <property type="entry name" value="GMPS_ATP_PPASE"/>
    <property type="match status" value="1"/>
</dbReference>
<protein>
    <recommendedName>
        <fullName>Putative GMP synthase [glutamine-hydrolyzing]</fullName>
        <ecNumber>6.3.5.2</ecNumber>
    </recommendedName>
    <alternativeName>
        <fullName>GMP synthetase</fullName>
    </alternativeName>
    <alternativeName>
        <fullName>Glutamine amidotransferase</fullName>
    </alternativeName>
</protein>
<evidence type="ECO:0000250" key="1"/>
<evidence type="ECO:0000255" key="2">
    <source>
        <dbReference type="PROSITE-ProRule" id="PRU00605"/>
    </source>
</evidence>
<evidence type="ECO:0000255" key="3">
    <source>
        <dbReference type="PROSITE-ProRule" id="PRU00886"/>
    </source>
</evidence>
<evidence type="ECO:0000305" key="4"/>
<feature type="chain" id="PRO_0000140110" description="Putative GMP synthase [glutamine-hydrolyzing]">
    <location>
        <begin position="1"/>
        <end position="429"/>
    </location>
</feature>
<feature type="domain" description="Glutamine amidotransferase type-1" evidence="2">
    <location>
        <begin position="10"/>
        <end position="118"/>
    </location>
</feature>
<feature type="domain" description="GMPS ATP-PPase" evidence="3">
    <location>
        <begin position="119"/>
        <end position="304"/>
    </location>
</feature>
<feature type="active site" description="Nucleophile" evidence="2">
    <location>
        <position position="87"/>
    </location>
</feature>
<feature type="active site" evidence="2">
    <location>
        <position position="176"/>
    </location>
</feature>
<feature type="active site" evidence="2">
    <location>
        <position position="178"/>
    </location>
</feature>
<name>GUAA_CHLPN</name>
<comment type="function">
    <text evidence="1">Catalyzes the synthesis of GMP from XMP.</text>
</comment>
<comment type="catalytic activity">
    <reaction>
        <text>XMP + L-glutamine + ATP + H2O = GMP + L-glutamate + AMP + diphosphate + 2 H(+)</text>
        <dbReference type="Rhea" id="RHEA:11680"/>
        <dbReference type="ChEBI" id="CHEBI:15377"/>
        <dbReference type="ChEBI" id="CHEBI:15378"/>
        <dbReference type="ChEBI" id="CHEBI:29985"/>
        <dbReference type="ChEBI" id="CHEBI:30616"/>
        <dbReference type="ChEBI" id="CHEBI:33019"/>
        <dbReference type="ChEBI" id="CHEBI:57464"/>
        <dbReference type="ChEBI" id="CHEBI:58115"/>
        <dbReference type="ChEBI" id="CHEBI:58359"/>
        <dbReference type="ChEBI" id="CHEBI:456215"/>
        <dbReference type="EC" id="6.3.5.2"/>
    </reaction>
</comment>
<comment type="pathway">
    <text>Purine metabolism; GMP biosynthesis; GMP from XMP (L-Gln route): step 1/1.</text>
</comment>
<comment type="subunit">
    <text evidence="1">Homodimer.</text>
</comment>
<comment type="caution">
    <text evidence="4">Could be the product of a pseudogene. Contains an internal deletion relative to its orthologs.</text>
</comment>
<gene>
    <name type="primary">guaA</name>
    <name type="ordered locus">CPn_0171</name>
    <name type="ordered locus">CP_0599</name>
    <name type="ordered locus">CpB0173</name>
</gene>
<accession>Q9Z913</accession>